<dbReference type="EMBL" id="LT708304">
    <property type="protein sequence ID" value="SIU00899.1"/>
    <property type="molecule type" value="Genomic_DNA"/>
</dbReference>
<dbReference type="RefSeq" id="NP_855937.1">
    <property type="nucleotide sequence ID" value="NC_002945.3"/>
</dbReference>
<dbReference type="RefSeq" id="WP_003899241.1">
    <property type="nucleotide sequence ID" value="NC_002945.4"/>
</dbReference>
<dbReference type="SMR" id="P64962"/>
<dbReference type="KEGG" id="mbo:BQ2027_MB2288"/>
<dbReference type="PATRIC" id="fig|233413.5.peg.2512"/>
<dbReference type="Proteomes" id="UP000001419">
    <property type="component" value="Chromosome"/>
</dbReference>
<dbReference type="GO" id="GO:0005886">
    <property type="term" value="C:plasma membrane"/>
    <property type="evidence" value="ECO:0007669"/>
    <property type="project" value="UniProtKB-SubCell"/>
</dbReference>
<dbReference type="GO" id="GO:0022857">
    <property type="term" value="F:transmembrane transporter activity"/>
    <property type="evidence" value="ECO:0007669"/>
    <property type="project" value="InterPro"/>
</dbReference>
<dbReference type="CDD" id="cd17370">
    <property type="entry name" value="MFS_MJ1317_like"/>
    <property type="match status" value="1"/>
</dbReference>
<dbReference type="Gene3D" id="1.20.1250.20">
    <property type="entry name" value="MFS general substrate transporter like domains"/>
    <property type="match status" value="2"/>
</dbReference>
<dbReference type="InterPro" id="IPR011701">
    <property type="entry name" value="MFS"/>
</dbReference>
<dbReference type="InterPro" id="IPR036259">
    <property type="entry name" value="MFS_trans_sf"/>
</dbReference>
<dbReference type="InterPro" id="IPR052425">
    <property type="entry name" value="Uncharacterized_MFS-type"/>
</dbReference>
<dbReference type="PANTHER" id="PTHR42688:SF1">
    <property type="entry name" value="BLR5212 PROTEIN"/>
    <property type="match status" value="1"/>
</dbReference>
<dbReference type="PANTHER" id="PTHR42688">
    <property type="entry name" value="CONSERVED PROTEIN"/>
    <property type="match status" value="1"/>
</dbReference>
<dbReference type="Pfam" id="PF07690">
    <property type="entry name" value="MFS_1"/>
    <property type="match status" value="1"/>
</dbReference>
<dbReference type="SUPFAM" id="SSF103473">
    <property type="entry name" value="MFS general substrate transporter"/>
    <property type="match status" value="1"/>
</dbReference>
<accession>P64962</accession>
<accession>A0A1R3Y0Q1</accession>
<accession>Q50697</accession>
<accession>X2BK80</accession>
<protein>
    <recommendedName>
        <fullName>Uncharacterized protein Mb2288</fullName>
    </recommendedName>
</protein>
<keyword id="KW-1003">Cell membrane</keyword>
<keyword id="KW-0472">Membrane</keyword>
<keyword id="KW-1185">Reference proteome</keyword>
<keyword id="KW-0812">Transmembrane</keyword>
<keyword id="KW-1133">Transmembrane helix</keyword>
<comment type="subcellular location">
    <subcellularLocation>
        <location evidence="2">Cell membrane</location>
        <topology evidence="2">Multi-pass membrane protein</topology>
    </subcellularLocation>
</comment>
<sequence length="409" mass="41890">MGANGDVALSRIGATRPALSAWRFVTVFGVVGLLADVVYEGARSITGPLLASLGATGLVVGVVTGVGEAAALGLRLVSGPLADRSRRFWAWTIAGYTLTVVTVPLLGIAGALWVACALVIAERVGKAVRGPAKDTLLSHAASVTGRGRGFAVHEALDQVGAMIGPLTVAGMLAITGNAYAPALGVLTLPGGAALALLLWLQRRVPRPESYEDCPVVLGNPSAPRPWALPAQFWLYCGFTAITMLGFGTFGLLSFHMVSHGVLAAAMVPVVYAAAMAADALTALASGFSYDRYGAKTLAVLPILSILVVLFAFTDNVTMVVIGTLVWGAAVGIQESTLRGVVADLVASPRRASAYGVFAAGLGAATAGGGALIGWLYDISIGTLVVVVIALELMALVMMFAIRLPRVAPS</sequence>
<reference key="1">
    <citation type="journal article" date="2003" name="Proc. Natl. Acad. Sci. U.S.A.">
        <title>The complete genome sequence of Mycobacterium bovis.</title>
        <authorList>
            <person name="Garnier T."/>
            <person name="Eiglmeier K."/>
            <person name="Camus J.-C."/>
            <person name="Medina N."/>
            <person name="Mansoor H."/>
            <person name="Pryor M."/>
            <person name="Duthoy S."/>
            <person name="Grondin S."/>
            <person name="Lacroix C."/>
            <person name="Monsempe C."/>
            <person name="Simon S."/>
            <person name="Harris B."/>
            <person name="Atkin R."/>
            <person name="Doggett J."/>
            <person name="Mayes R."/>
            <person name="Keating L."/>
            <person name="Wheeler P.R."/>
            <person name="Parkhill J."/>
            <person name="Barrell B.G."/>
            <person name="Cole S.T."/>
            <person name="Gordon S.V."/>
            <person name="Hewinson R.G."/>
        </authorList>
    </citation>
    <scope>NUCLEOTIDE SEQUENCE [LARGE SCALE GENOMIC DNA]</scope>
    <source>
        <strain>ATCC BAA-935 / AF2122/97</strain>
    </source>
</reference>
<reference key="2">
    <citation type="journal article" date="2017" name="Genome Announc.">
        <title>Updated reference genome sequence and annotation of Mycobacterium bovis AF2122/97.</title>
        <authorList>
            <person name="Malone K.M."/>
            <person name="Farrell D."/>
            <person name="Stuber T.P."/>
            <person name="Schubert O.T."/>
            <person name="Aebersold R."/>
            <person name="Robbe-Austerman S."/>
            <person name="Gordon S.V."/>
        </authorList>
    </citation>
    <scope>NUCLEOTIDE SEQUENCE [LARGE SCALE GENOMIC DNA]</scope>
    <scope>GENOME REANNOTATION</scope>
    <source>
        <strain>ATCC BAA-935 / AF2122/97</strain>
    </source>
</reference>
<gene>
    <name type="ordered locus">BQ2027_MB2288</name>
</gene>
<evidence type="ECO:0000255" key="1"/>
<evidence type="ECO:0000305" key="2"/>
<feature type="chain" id="PRO_0000103992" description="Uncharacterized protein Mb2288">
    <location>
        <begin position="1"/>
        <end position="409"/>
    </location>
</feature>
<feature type="transmembrane region" description="Helical" evidence="1">
    <location>
        <begin position="18"/>
        <end position="38"/>
    </location>
</feature>
<feature type="transmembrane region" description="Helical" evidence="1">
    <location>
        <begin position="47"/>
        <end position="67"/>
    </location>
</feature>
<feature type="transmembrane region" description="Helical" evidence="1">
    <location>
        <begin position="100"/>
        <end position="120"/>
    </location>
</feature>
<feature type="transmembrane region" description="Helical" evidence="1">
    <location>
        <begin position="159"/>
        <end position="179"/>
    </location>
</feature>
<feature type="transmembrane region" description="Helical" evidence="1">
    <location>
        <begin position="180"/>
        <end position="200"/>
    </location>
</feature>
<feature type="transmembrane region" description="Helical" evidence="1">
    <location>
        <begin position="232"/>
        <end position="252"/>
    </location>
</feature>
<feature type="transmembrane region" description="Helical" evidence="1">
    <location>
        <begin position="260"/>
        <end position="280"/>
    </location>
</feature>
<feature type="transmembrane region" description="Helical" evidence="1">
    <location>
        <begin position="302"/>
        <end position="322"/>
    </location>
</feature>
<feature type="transmembrane region" description="Helical" evidence="1">
    <location>
        <begin position="355"/>
        <end position="375"/>
    </location>
</feature>
<feature type="transmembrane region" description="Helical" evidence="1">
    <location>
        <begin position="380"/>
        <end position="400"/>
    </location>
</feature>
<organism>
    <name type="scientific">Mycobacterium bovis (strain ATCC BAA-935 / AF2122/97)</name>
    <dbReference type="NCBI Taxonomy" id="233413"/>
    <lineage>
        <taxon>Bacteria</taxon>
        <taxon>Bacillati</taxon>
        <taxon>Actinomycetota</taxon>
        <taxon>Actinomycetes</taxon>
        <taxon>Mycobacteriales</taxon>
        <taxon>Mycobacteriaceae</taxon>
        <taxon>Mycobacterium</taxon>
        <taxon>Mycobacterium tuberculosis complex</taxon>
    </lineage>
</organism>
<proteinExistence type="predicted"/>
<name>Y2288_MYCBO</name>